<reference key="1">
    <citation type="journal article" date="2007" name="Theor. Appl. Genet.">
        <title>Complete chloroplast genome sequences of Hordeum vulgare, Sorghum bicolor and Agrostis stolonifera, and comparative analyses with other grass genomes.</title>
        <authorList>
            <person name="Saski C."/>
            <person name="Lee S.-B."/>
            <person name="Fjellheim S."/>
            <person name="Guda C."/>
            <person name="Jansen R.K."/>
            <person name="Luo H."/>
            <person name="Tomkins J."/>
            <person name="Rognli O.A."/>
            <person name="Daniell H."/>
            <person name="Clarke J.L."/>
        </authorList>
    </citation>
    <scope>NUCLEOTIDE SEQUENCE [LARGE SCALE GENOMIC DNA]</scope>
    <source>
        <strain>cv. BTx623</strain>
    </source>
</reference>
<accession>A1E9U3</accession>
<geneLocation type="chloroplast"/>
<evidence type="ECO:0000255" key="1">
    <source>
        <dbReference type="HAMAP-Rule" id="MF_00432"/>
    </source>
</evidence>
<comment type="function">
    <text evidence="1">Component of the cytochrome b6-f complex, which mediates electron transfer between photosystem II (PSII) and photosystem I (PSI), cyclic electron flow around PSI, and state transitions. PetG is required for either the stability or assembly of the cytochrome b6-f complex.</text>
</comment>
<comment type="subunit">
    <text evidence="1">The 4 large subunits of the cytochrome b6-f complex are cytochrome b6, subunit IV (17 kDa polypeptide, PetD), cytochrome f and the Rieske protein, while the 4 small subunits are PetG, PetL, PetM and PetN. The complex functions as a dimer.</text>
</comment>
<comment type="subcellular location">
    <subcellularLocation>
        <location evidence="1">Plastid</location>
        <location evidence="1">Chloroplast thylakoid membrane</location>
        <topology evidence="1">Single-pass membrane protein</topology>
    </subcellularLocation>
</comment>
<comment type="similarity">
    <text evidence="1">Belongs to the PetG family.</text>
</comment>
<keyword id="KW-0150">Chloroplast</keyword>
<keyword id="KW-0249">Electron transport</keyword>
<keyword id="KW-0472">Membrane</keyword>
<keyword id="KW-0602">Photosynthesis</keyword>
<keyword id="KW-0934">Plastid</keyword>
<keyword id="KW-1185">Reference proteome</keyword>
<keyword id="KW-0793">Thylakoid</keyword>
<keyword id="KW-0812">Transmembrane</keyword>
<keyword id="KW-1133">Transmembrane helix</keyword>
<keyword id="KW-0813">Transport</keyword>
<gene>
    <name evidence="1" type="primary">petG</name>
</gene>
<name>PETG_SORBI</name>
<sequence>MIEVFLFGIVLGLIPITLAGLFVTAYLQYRRGDQLDL</sequence>
<feature type="chain" id="PRO_0000275510" description="Cytochrome b6-f complex subunit 5">
    <location>
        <begin position="1"/>
        <end position="37"/>
    </location>
</feature>
<feature type="transmembrane region" description="Helical" evidence="1">
    <location>
        <begin position="5"/>
        <end position="25"/>
    </location>
</feature>
<organism>
    <name type="scientific">Sorghum bicolor</name>
    <name type="common">Sorghum</name>
    <name type="synonym">Sorghum vulgare</name>
    <dbReference type="NCBI Taxonomy" id="4558"/>
    <lineage>
        <taxon>Eukaryota</taxon>
        <taxon>Viridiplantae</taxon>
        <taxon>Streptophyta</taxon>
        <taxon>Embryophyta</taxon>
        <taxon>Tracheophyta</taxon>
        <taxon>Spermatophyta</taxon>
        <taxon>Magnoliopsida</taxon>
        <taxon>Liliopsida</taxon>
        <taxon>Poales</taxon>
        <taxon>Poaceae</taxon>
        <taxon>PACMAD clade</taxon>
        <taxon>Panicoideae</taxon>
        <taxon>Andropogonodae</taxon>
        <taxon>Andropogoneae</taxon>
        <taxon>Sorghinae</taxon>
        <taxon>Sorghum</taxon>
    </lineage>
</organism>
<proteinExistence type="inferred from homology"/>
<dbReference type="EMBL" id="EF115542">
    <property type="protein sequence ID" value="ABK79515.1"/>
    <property type="molecule type" value="Genomic_DNA"/>
</dbReference>
<dbReference type="RefSeq" id="YP_899426.1">
    <property type="nucleotide sequence ID" value="NC_008602.1"/>
</dbReference>
<dbReference type="SMR" id="A1E9U3"/>
<dbReference type="FunCoup" id="A1E9U3">
    <property type="interactions" value="77"/>
</dbReference>
<dbReference type="STRING" id="4558.A1E9U3"/>
<dbReference type="GeneID" id="4549178"/>
<dbReference type="KEGG" id="sbi:4549178"/>
<dbReference type="InParanoid" id="A1E9U3"/>
<dbReference type="OrthoDB" id="35473at2759"/>
<dbReference type="Proteomes" id="UP000000768">
    <property type="component" value="Chloroplast"/>
</dbReference>
<dbReference type="GO" id="GO:0009535">
    <property type="term" value="C:chloroplast thylakoid membrane"/>
    <property type="evidence" value="ECO:0007669"/>
    <property type="project" value="UniProtKB-SubCell"/>
</dbReference>
<dbReference type="GO" id="GO:0009512">
    <property type="term" value="C:cytochrome b6f complex"/>
    <property type="evidence" value="ECO:0007669"/>
    <property type="project" value="InterPro"/>
</dbReference>
<dbReference type="GO" id="GO:0045158">
    <property type="term" value="F:electron transporter, transferring electrons within cytochrome b6/f complex of photosystem II activity"/>
    <property type="evidence" value="ECO:0007669"/>
    <property type="project" value="UniProtKB-UniRule"/>
</dbReference>
<dbReference type="GO" id="GO:0017004">
    <property type="term" value="P:cytochrome complex assembly"/>
    <property type="evidence" value="ECO:0007669"/>
    <property type="project" value="UniProtKB-UniRule"/>
</dbReference>
<dbReference type="GO" id="GO:0015979">
    <property type="term" value="P:photosynthesis"/>
    <property type="evidence" value="ECO:0007669"/>
    <property type="project" value="UniProtKB-KW"/>
</dbReference>
<dbReference type="HAMAP" id="MF_00432">
    <property type="entry name" value="Cytb6_f_PetG"/>
    <property type="match status" value="1"/>
</dbReference>
<dbReference type="InterPro" id="IPR003683">
    <property type="entry name" value="Cyt_6/f_cplx_su5"/>
</dbReference>
<dbReference type="InterPro" id="IPR036099">
    <property type="entry name" value="Cyt_6/f_cplx_su5_sf"/>
</dbReference>
<dbReference type="NCBIfam" id="NF001907">
    <property type="entry name" value="PRK00665.1"/>
    <property type="match status" value="1"/>
</dbReference>
<dbReference type="Pfam" id="PF02529">
    <property type="entry name" value="PetG"/>
    <property type="match status" value="1"/>
</dbReference>
<dbReference type="PIRSF" id="PIRSF000034">
    <property type="entry name" value="Cyt_b6-f_V"/>
    <property type="match status" value="1"/>
</dbReference>
<dbReference type="SUPFAM" id="SSF103446">
    <property type="entry name" value="PetG subunit of the cytochrome b6f complex"/>
    <property type="match status" value="1"/>
</dbReference>
<protein>
    <recommendedName>
        <fullName evidence="1">Cytochrome b6-f complex subunit 5</fullName>
    </recommendedName>
    <alternativeName>
        <fullName evidence="1">Cytochrome b6-f complex subunit PetG</fullName>
    </alternativeName>
    <alternativeName>
        <fullName evidence="1">Cytochrome b6-f complex subunit V</fullName>
    </alternativeName>
</protein>